<feature type="signal peptide" evidence="3">
    <location>
        <begin position="1"/>
        <end position="22"/>
    </location>
</feature>
<feature type="chain" id="PRO_0000365523" description="Germin-like protein 8-11">
    <location>
        <begin position="23"/>
        <end position="224"/>
    </location>
</feature>
<feature type="domain" description="Cupin type-1" evidence="2">
    <location>
        <begin position="62"/>
        <end position="212"/>
    </location>
</feature>
<feature type="binding site" evidence="1">
    <location>
        <position position="109"/>
    </location>
    <ligand>
        <name>Mn(2+)</name>
        <dbReference type="ChEBI" id="CHEBI:29035"/>
    </ligand>
</feature>
<feature type="binding site" evidence="1">
    <location>
        <position position="111"/>
    </location>
    <ligand>
        <name>Mn(2+)</name>
        <dbReference type="ChEBI" id="CHEBI:29035"/>
    </ligand>
</feature>
<feature type="binding site" evidence="1">
    <location>
        <position position="116"/>
    </location>
    <ligand>
        <name>Mn(2+)</name>
        <dbReference type="ChEBI" id="CHEBI:29035"/>
    </ligand>
</feature>
<feature type="binding site" evidence="1">
    <location>
        <position position="157"/>
    </location>
    <ligand>
        <name>Mn(2+)</name>
        <dbReference type="ChEBI" id="CHEBI:29035"/>
    </ligand>
</feature>
<feature type="glycosylation site" description="N-linked (GlcNAc...) asparagine" evidence="2">
    <location>
        <position position="76"/>
    </location>
</feature>
<feature type="disulfide bond" evidence="1">
    <location>
        <begin position="32"/>
        <end position="47"/>
    </location>
</feature>
<sequence>MASSSFLLLATLLAMASWQGMASDPSPLQDFCVADMHSPVLVNGFACLNPKDVNADHFFKAAMLDTPRKTNKVGSNVTLINVMQIPGLNTLGISIARIDYAPLGQNPPHTHPRATEILTVLEGTLYVGFVTSNPDNKFFSKVLNKGDVFVFPVGLIHFQFNPNPYKPAVAIAALSSQNPGAITIANAVFGSKPPISDDVLAKAFQVEKGTIDWLQAQFWENNHY</sequence>
<comment type="function">
    <text evidence="4">Plays a role in broad-spectrum disease resistance. Probably has no oxalate oxidase activity even if the active site is conserved.</text>
</comment>
<comment type="subunit">
    <text evidence="1">Oligomer (believed to be a pentamer but probably hexamer).</text>
</comment>
<comment type="subcellular location">
    <subcellularLocation>
        <location evidence="1">Secreted</location>
        <location evidence="1">Extracellular space</location>
        <location evidence="1">Apoplast</location>
    </subcellularLocation>
</comment>
<comment type="miscellaneous">
    <text>Member of the 12 germin-like protein gene cluster located on chromosome 8 in the major-effect quantitative trait loci (QTL) for fungal blast resistance. Partial suppression of the 12 germin-like protein genes increases susceptibility to the fungal pathogens causing rice blast and sheath blight diseases.</text>
</comment>
<comment type="similarity">
    <text evidence="5">Belongs to the germin family.</text>
</comment>
<proteinExistence type="evidence at protein level"/>
<keyword id="KW-0052">Apoplast</keyword>
<keyword id="KW-0903">Direct protein sequencing</keyword>
<keyword id="KW-1015">Disulfide bond</keyword>
<keyword id="KW-0325">Glycoprotein</keyword>
<keyword id="KW-0464">Manganese</keyword>
<keyword id="KW-0479">Metal-binding</keyword>
<keyword id="KW-1185">Reference proteome</keyword>
<keyword id="KW-0964">Secreted</keyword>
<keyword id="KW-0732">Signal</keyword>
<evidence type="ECO:0000250" key="1"/>
<evidence type="ECO:0000255" key="2"/>
<evidence type="ECO:0000269" key="3">
    <source>
    </source>
</evidence>
<evidence type="ECO:0000269" key="4">
    <source>
    </source>
</evidence>
<evidence type="ECO:0000305" key="5"/>
<gene>
    <name type="ordered locus">Os08g0190100</name>
    <name type="ordered locus">LOC_Os08g09080</name>
    <name type="ORF">B1099H05.40</name>
    <name type="ORF">OsJ_025238</name>
    <name type="ORF">P0610E02.16</name>
</gene>
<accession>Q6YZY5</accession>
<accession>A0A0P0XCQ1</accession>
<accession>Q9S7K3</accession>
<name>GL811_ORYSJ</name>
<reference key="1">
    <citation type="submission" date="1999-04" db="EMBL/GenBank/DDBJ databases">
        <title>Stress responsive rice root germin-like proteins.</title>
        <authorList>
            <person name="Naqvi S.M.S."/>
            <person name="Takahashi M."/>
        </authorList>
    </citation>
    <scope>NUCLEOTIDE SEQUENCE [GENOMIC DNA / MRNA]</scope>
    <source>
        <strain>cv. Nipponbare</strain>
        <tissue>Root</tissue>
    </source>
</reference>
<reference key="2">
    <citation type="journal article" date="2005" name="Nature">
        <title>The map-based sequence of the rice genome.</title>
        <authorList>
            <consortium name="International rice genome sequencing project (IRGSP)"/>
        </authorList>
    </citation>
    <scope>NUCLEOTIDE SEQUENCE [LARGE SCALE GENOMIC DNA]</scope>
    <source>
        <strain>cv. Nipponbare</strain>
    </source>
</reference>
<reference key="3">
    <citation type="journal article" date="2008" name="Nucleic Acids Res.">
        <title>The rice annotation project database (RAP-DB): 2008 update.</title>
        <authorList>
            <consortium name="The rice annotation project (RAP)"/>
        </authorList>
    </citation>
    <scope>GENOME REANNOTATION</scope>
    <source>
        <strain>cv. Nipponbare</strain>
    </source>
</reference>
<reference key="4">
    <citation type="journal article" date="2013" name="Rice">
        <title>Improvement of the Oryza sativa Nipponbare reference genome using next generation sequence and optical map data.</title>
        <authorList>
            <person name="Kawahara Y."/>
            <person name="de la Bastide M."/>
            <person name="Hamilton J.P."/>
            <person name="Kanamori H."/>
            <person name="McCombie W.R."/>
            <person name="Ouyang S."/>
            <person name="Schwartz D.C."/>
            <person name="Tanaka T."/>
            <person name="Wu J."/>
            <person name="Zhou S."/>
            <person name="Childs K.L."/>
            <person name="Davidson R.M."/>
            <person name="Lin H."/>
            <person name="Quesada-Ocampo L."/>
            <person name="Vaillancourt B."/>
            <person name="Sakai H."/>
            <person name="Lee S.S."/>
            <person name="Kim J."/>
            <person name="Numa H."/>
            <person name="Itoh T."/>
            <person name="Buell C.R."/>
            <person name="Matsumoto T."/>
        </authorList>
    </citation>
    <scope>GENOME REANNOTATION</scope>
    <source>
        <strain>cv. Nipponbare</strain>
    </source>
</reference>
<reference key="5">
    <citation type="journal article" date="2005" name="PLoS Biol.">
        <title>The genomes of Oryza sativa: a history of duplications.</title>
        <authorList>
            <person name="Yu J."/>
            <person name="Wang J."/>
            <person name="Lin W."/>
            <person name="Li S."/>
            <person name="Li H."/>
            <person name="Zhou J."/>
            <person name="Ni P."/>
            <person name="Dong W."/>
            <person name="Hu S."/>
            <person name="Zeng C."/>
            <person name="Zhang J."/>
            <person name="Zhang Y."/>
            <person name="Li R."/>
            <person name="Xu Z."/>
            <person name="Li S."/>
            <person name="Li X."/>
            <person name="Zheng H."/>
            <person name="Cong L."/>
            <person name="Lin L."/>
            <person name="Yin J."/>
            <person name="Geng J."/>
            <person name="Li G."/>
            <person name="Shi J."/>
            <person name="Liu J."/>
            <person name="Lv H."/>
            <person name="Li J."/>
            <person name="Wang J."/>
            <person name="Deng Y."/>
            <person name="Ran L."/>
            <person name="Shi X."/>
            <person name="Wang X."/>
            <person name="Wu Q."/>
            <person name="Li C."/>
            <person name="Ren X."/>
            <person name="Wang J."/>
            <person name="Wang X."/>
            <person name="Li D."/>
            <person name="Liu D."/>
            <person name="Zhang X."/>
            <person name="Ji Z."/>
            <person name="Zhao W."/>
            <person name="Sun Y."/>
            <person name="Zhang Z."/>
            <person name="Bao J."/>
            <person name="Han Y."/>
            <person name="Dong L."/>
            <person name="Ji J."/>
            <person name="Chen P."/>
            <person name="Wu S."/>
            <person name="Liu J."/>
            <person name="Xiao Y."/>
            <person name="Bu D."/>
            <person name="Tan J."/>
            <person name="Yang L."/>
            <person name="Ye C."/>
            <person name="Zhang J."/>
            <person name="Xu J."/>
            <person name="Zhou Y."/>
            <person name="Yu Y."/>
            <person name="Zhang B."/>
            <person name="Zhuang S."/>
            <person name="Wei H."/>
            <person name="Liu B."/>
            <person name="Lei M."/>
            <person name="Yu H."/>
            <person name="Li Y."/>
            <person name="Xu H."/>
            <person name="Wei S."/>
            <person name="He X."/>
            <person name="Fang L."/>
            <person name="Zhang Z."/>
            <person name="Zhang Y."/>
            <person name="Huang X."/>
            <person name="Su Z."/>
            <person name="Tong W."/>
            <person name="Li J."/>
            <person name="Tong Z."/>
            <person name="Li S."/>
            <person name="Ye J."/>
            <person name="Wang L."/>
            <person name="Fang L."/>
            <person name="Lei T."/>
            <person name="Chen C.-S."/>
            <person name="Chen H.-C."/>
            <person name="Xu Z."/>
            <person name="Li H."/>
            <person name="Huang H."/>
            <person name="Zhang F."/>
            <person name="Xu H."/>
            <person name="Li N."/>
            <person name="Zhao C."/>
            <person name="Li S."/>
            <person name="Dong L."/>
            <person name="Huang Y."/>
            <person name="Li L."/>
            <person name="Xi Y."/>
            <person name="Qi Q."/>
            <person name="Li W."/>
            <person name="Zhang B."/>
            <person name="Hu W."/>
            <person name="Zhang Y."/>
            <person name="Tian X."/>
            <person name="Jiao Y."/>
            <person name="Liang X."/>
            <person name="Jin J."/>
            <person name="Gao L."/>
            <person name="Zheng W."/>
            <person name="Hao B."/>
            <person name="Liu S.-M."/>
            <person name="Wang W."/>
            <person name="Yuan L."/>
            <person name="Cao M."/>
            <person name="McDermott J."/>
            <person name="Samudrala R."/>
            <person name="Wang J."/>
            <person name="Wong G.K.-S."/>
            <person name="Yang H."/>
        </authorList>
    </citation>
    <scope>NUCLEOTIDE SEQUENCE [LARGE SCALE GENOMIC DNA]</scope>
    <source>
        <strain>cv. Nipponbare</strain>
    </source>
</reference>
<reference key="6">
    <citation type="journal article" date="2006" name="Proteomics">
        <title>Proteomic analysis of rice leaf, stem and root tissues during growth course.</title>
        <authorList>
            <person name="Nozu Y."/>
            <person name="Tsugita A."/>
            <person name="Kamijo K."/>
        </authorList>
    </citation>
    <scope>PROTEIN SEQUENCE [LARGE SCALE ANALYSIS] OF 23-29</scope>
    <scope>IDENTIFICATION BY MASS SPECTROMETRY</scope>
    <source>
        <strain>cv. Nipponbare</strain>
    </source>
</reference>
<reference key="7">
    <citation type="journal article" date="2009" name="Plant Physiol.">
        <title>A germin-like protein gene family functions as a complex quantitative trait locus conferring broad-spectrum disease resistance in rice.</title>
        <authorList>
            <person name="Manosalva P.M."/>
            <person name="Davidson R.M."/>
            <person name="Liu B."/>
            <person name="Zhu X."/>
            <person name="Hulbert S.H."/>
            <person name="Leung H."/>
            <person name="Leach J.E."/>
        </authorList>
    </citation>
    <scope>FUNCTION</scope>
</reference>
<organism>
    <name type="scientific">Oryza sativa subsp. japonica</name>
    <name type="common">Rice</name>
    <dbReference type="NCBI Taxonomy" id="39947"/>
    <lineage>
        <taxon>Eukaryota</taxon>
        <taxon>Viridiplantae</taxon>
        <taxon>Streptophyta</taxon>
        <taxon>Embryophyta</taxon>
        <taxon>Tracheophyta</taxon>
        <taxon>Spermatophyta</taxon>
        <taxon>Magnoliopsida</taxon>
        <taxon>Liliopsida</taxon>
        <taxon>Poales</taxon>
        <taxon>Poaceae</taxon>
        <taxon>BOP clade</taxon>
        <taxon>Oryzoideae</taxon>
        <taxon>Oryzeae</taxon>
        <taxon>Oryzinae</taxon>
        <taxon>Oryza</taxon>
        <taxon>Oryza sativa</taxon>
    </lineage>
</organism>
<dbReference type="EMBL" id="AF141878">
    <property type="protein sequence ID" value="AAD43971.1"/>
    <property type="molecule type" value="mRNA"/>
</dbReference>
<dbReference type="EMBL" id="AF141880">
    <property type="protein sequence ID" value="AAD43973.1"/>
    <property type="molecule type" value="Genomic_DNA"/>
</dbReference>
<dbReference type="EMBL" id="AP005505">
    <property type="protein sequence ID" value="BAD05742.1"/>
    <property type="molecule type" value="Genomic_DNA"/>
</dbReference>
<dbReference type="EMBL" id="AP005531">
    <property type="protein sequence ID" value="BAD05781.1"/>
    <property type="molecule type" value="Genomic_DNA"/>
</dbReference>
<dbReference type="EMBL" id="AP008214">
    <property type="protein sequence ID" value="BAF23078.1"/>
    <property type="molecule type" value="Genomic_DNA"/>
</dbReference>
<dbReference type="EMBL" id="AP014964">
    <property type="protein sequence ID" value="BAT04160.1"/>
    <property type="molecule type" value="Genomic_DNA"/>
</dbReference>
<dbReference type="EMBL" id="CM000145">
    <property type="protein sequence ID" value="EAZ41755.1"/>
    <property type="molecule type" value="Genomic_DNA"/>
</dbReference>
<dbReference type="RefSeq" id="XP_015651069.1">
    <property type="nucleotide sequence ID" value="XM_015795583.1"/>
</dbReference>
<dbReference type="SMR" id="Q6YZY5"/>
<dbReference type="FunCoup" id="Q6YZY5">
    <property type="interactions" value="40"/>
</dbReference>
<dbReference type="STRING" id="39947.Q6YZY5"/>
<dbReference type="PaxDb" id="39947-Q6YZY5"/>
<dbReference type="EnsemblPlants" id="Os08t0190100-01">
    <property type="protein sequence ID" value="Os08t0190100-01"/>
    <property type="gene ID" value="Os08g0190100"/>
</dbReference>
<dbReference type="Gramene" id="Os08t0190100-01">
    <property type="protein sequence ID" value="Os08t0190100-01"/>
    <property type="gene ID" value="Os08g0190100"/>
</dbReference>
<dbReference type="KEGG" id="dosa:Os08g0190100"/>
<dbReference type="InParanoid" id="Q6YZY5"/>
<dbReference type="OrthoDB" id="1850619at2759"/>
<dbReference type="Proteomes" id="UP000000763">
    <property type="component" value="Chromosome 8"/>
</dbReference>
<dbReference type="Proteomes" id="UP000007752">
    <property type="component" value="Chromosome 8"/>
</dbReference>
<dbReference type="Proteomes" id="UP000059680">
    <property type="component" value="Chromosome 8"/>
</dbReference>
<dbReference type="GO" id="GO:0048046">
    <property type="term" value="C:apoplast"/>
    <property type="evidence" value="ECO:0007669"/>
    <property type="project" value="UniProtKB-SubCell"/>
</dbReference>
<dbReference type="GO" id="GO:0030145">
    <property type="term" value="F:manganese ion binding"/>
    <property type="evidence" value="ECO:0007669"/>
    <property type="project" value="InterPro"/>
</dbReference>
<dbReference type="CDD" id="cd02241">
    <property type="entry name" value="cupin_OxOx"/>
    <property type="match status" value="1"/>
</dbReference>
<dbReference type="FunFam" id="2.60.120.10:FF:000005">
    <property type="entry name" value="Germin-like protein subfamily 1 member 8"/>
    <property type="match status" value="1"/>
</dbReference>
<dbReference type="Gene3D" id="2.60.120.10">
    <property type="entry name" value="Jelly Rolls"/>
    <property type="match status" value="1"/>
</dbReference>
<dbReference type="InterPro" id="IPR006045">
    <property type="entry name" value="Cupin_1"/>
</dbReference>
<dbReference type="InterPro" id="IPR001929">
    <property type="entry name" value="Germin"/>
</dbReference>
<dbReference type="InterPro" id="IPR019780">
    <property type="entry name" value="Germin_Mn-BS"/>
</dbReference>
<dbReference type="InterPro" id="IPR014710">
    <property type="entry name" value="RmlC-like_jellyroll"/>
</dbReference>
<dbReference type="InterPro" id="IPR011051">
    <property type="entry name" value="RmlC_Cupin_sf"/>
</dbReference>
<dbReference type="PANTHER" id="PTHR31238">
    <property type="entry name" value="GERMIN-LIKE PROTEIN SUBFAMILY 3 MEMBER 3"/>
    <property type="match status" value="1"/>
</dbReference>
<dbReference type="Pfam" id="PF00190">
    <property type="entry name" value="Cupin_1"/>
    <property type="match status" value="1"/>
</dbReference>
<dbReference type="PRINTS" id="PR00325">
    <property type="entry name" value="GERMIN"/>
</dbReference>
<dbReference type="SMART" id="SM00835">
    <property type="entry name" value="Cupin_1"/>
    <property type="match status" value="1"/>
</dbReference>
<dbReference type="SUPFAM" id="SSF51182">
    <property type="entry name" value="RmlC-like cupins"/>
    <property type="match status" value="1"/>
</dbReference>
<dbReference type="PROSITE" id="PS00725">
    <property type="entry name" value="GERMIN"/>
    <property type="match status" value="1"/>
</dbReference>
<protein>
    <recommendedName>
        <fullName>Germin-like protein 8-11</fullName>
    </recommendedName>
</protein>